<evidence type="ECO:0000255" key="1">
    <source>
        <dbReference type="HAMAP-Rule" id="MF_00001"/>
    </source>
</evidence>
<comment type="function">
    <text evidence="1">Catalyzes the condensation of carbamoyl phosphate and aspartate to form carbamoyl aspartate and inorganic phosphate, the committed step in the de novo pyrimidine nucleotide biosynthesis pathway.</text>
</comment>
<comment type="catalytic activity">
    <reaction evidence="1">
        <text>carbamoyl phosphate + L-aspartate = N-carbamoyl-L-aspartate + phosphate + H(+)</text>
        <dbReference type="Rhea" id="RHEA:20013"/>
        <dbReference type="ChEBI" id="CHEBI:15378"/>
        <dbReference type="ChEBI" id="CHEBI:29991"/>
        <dbReference type="ChEBI" id="CHEBI:32814"/>
        <dbReference type="ChEBI" id="CHEBI:43474"/>
        <dbReference type="ChEBI" id="CHEBI:58228"/>
        <dbReference type="EC" id="2.1.3.2"/>
    </reaction>
</comment>
<comment type="pathway">
    <text evidence="1">Pyrimidine metabolism; UMP biosynthesis via de novo pathway; (S)-dihydroorotate from bicarbonate: step 2/3.</text>
</comment>
<comment type="subunit">
    <text evidence="1">Heterododecamer (2C3:3R2) of six catalytic PyrB chains organized as two trimers (C3), and six regulatory PyrI chains organized as three dimers (R2).</text>
</comment>
<comment type="similarity">
    <text evidence="1">Belongs to the aspartate/ornithine carbamoyltransferase superfamily. ATCase family.</text>
</comment>
<gene>
    <name evidence="1" type="primary">pyrB</name>
    <name type="ordered locus">sync_0343</name>
</gene>
<accession>Q0ID96</accession>
<reference key="1">
    <citation type="journal article" date="2006" name="Proc. Natl. Acad. Sci. U.S.A.">
        <title>Genome sequence of Synechococcus CC9311: insights into adaptation to a coastal environment.</title>
        <authorList>
            <person name="Palenik B."/>
            <person name="Ren Q."/>
            <person name="Dupont C.L."/>
            <person name="Myers G.S."/>
            <person name="Heidelberg J.F."/>
            <person name="Badger J.H."/>
            <person name="Madupu R."/>
            <person name="Nelson W.C."/>
            <person name="Brinkac L.M."/>
            <person name="Dodson R.J."/>
            <person name="Durkin A.S."/>
            <person name="Daugherty S.C."/>
            <person name="Sullivan S.A."/>
            <person name="Khouri H."/>
            <person name="Mohamoud Y."/>
            <person name="Halpin R."/>
            <person name="Paulsen I.T."/>
        </authorList>
    </citation>
    <scope>NUCLEOTIDE SEQUENCE [LARGE SCALE GENOMIC DNA]</scope>
    <source>
        <strain>CC9311</strain>
    </source>
</reference>
<name>PYRB_SYNS3</name>
<protein>
    <recommendedName>
        <fullName evidence="1">Aspartate carbamoyltransferase catalytic subunit</fullName>
        <ecNumber evidence="1">2.1.3.2</ecNumber>
    </recommendedName>
    <alternativeName>
        <fullName evidence="1">Aspartate transcarbamylase</fullName>
        <shortName evidence="1">ATCase</shortName>
    </alternativeName>
</protein>
<dbReference type="EC" id="2.1.3.2" evidence="1"/>
<dbReference type="EMBL" id="CP000435">
    <property type="protein sequence ID" value="ABI46806.1"/>
    <property type="molecule type" value="Genomic_DNA"/>
</dbReference>
<dbReference type="RefSeq" id="WP_011618317.1">
    <property type="nucleotide sequence ID" value="NC_008319.1"/>
</dbReference>
<dbReference type="SMR" id="Q0ID96"/>
<dbReference type="STRING" id="64471.sync_0343"/>
<dbReference type="KEGG" id="syg:sync_0343"/>
<dbReference type="eggNOG" id="COG0540">
    <property type="taxonomic scope" value="Bacteria"/>
</dbReference>
<dbReference type="HOGENOM" id="CLU_043846_2_0_3"/>
<dbReference type="OrthoDB" id="9774690at2"/>
<dbReference type="UniPathway" id="UPA00070">
    <property type="reaction ID" value="UER00116"/>
</dbReference>
<dbReference type="Proteomes" id="UP000001961">
    <property type="component" value="Chromosome"/>
</dbReference>
<dbReference type="GO" id="GO:0005829">
    <property type="term" value="C:cytosol"/>
    <property type="evidence" value="ECO:0007669"/>
    <property type="project" value="TreeGrafter"/>
</dbReference>
<dbReference type="GO" id="GO:0016597">
    <property type="term" value="F:amino acid binding"/>
    <property type="evidence" value="ECO:0007669"/>
    <property type="project" value="InterPro"/>
</dbReference>
<dbReference type="GO" id="GO:0004070">
    <property type="term" value="F:aspartate carbamoyltransferase activity"/>
    <property type="evidence" value="ECO:0007669"/>
    <property type="project" value="UniProtKB-UniRule"/>
</dbReference>
<dbReference type="GO" id="GO:0006207">
    <property type="term" value="P:'de novo' pyrimidine nucleobase biosynthetic process"/>
    <property type="evidence" value="ECO:0007669"/>
    <property type="project" value="InterPro"/>
</dbReference>
<dbReference type="GO" id="GO:0044205">
    <property type="term" value="P:'de novo' UMP biosynthetic process"/>
    <property type="evidence" value="ECO:0007669"/>
    <property type="project" value="UniProtKB-UniRule"/>
</dbReference>
<dbReference type="GO" id="GO:0006520">
    <property type="term" value="P:amino acid metabolic process"/>
    <property type="evidence" value="ECO:0007669"/>
    <property type="project" value="InterPro"/>
</dbReference>
<dbReference type="Gene3D" id="3.40.50.1370">
    <property type="entry name" value="Aspartate/ornithine carbamoyltransferase"/>
    <property type="match status" value="2"/>
</dbReference>
<dbReference type="HAMAP" id="MF_00001">
    <property type="entry name" value="Asp_carb_tr"/>
    <property type="match status" value="1"/>
</dbReference>
<dbReference type="InterPro" id="IPR006132">
    <property type="entry name" value="Asp/Orn_carbamoyltranf_P-bd"/>
</dbReference>
<dbReference type="InterPro" id="IPR006130">
    <property type="entry name" value="Asp/Orn_carbamoylTrfase"/>
</dbReference>
<dbReference type="InterPro" id="IPR036901">
    <property type="entry name" value="Asp/Orn_carbamoylTrfase_sf"/>
</dbReference>
<dbReference type="InterPro" id="IPR002082">
    <property type="entry name" value="Asp_carbamoyltransf"/>
</dbReference>
<dbReference type="InterPro" id="IPR006131">
    <property type="entry name" value="Asp_carbamoyltransf_Asp/Orn-bd"/>
</dbReference>
<dbReference type="NCBIfam" id="TIGR00670">
    <property type="entry name" value="asp_carb_tr"/>
    <property type="match status" value="1"/>
</dbReference>
<dbReference type="NCBIfam" id="NF002032">
    <property type="entry name" value="PRK00856.1"/>
    <property type="match status" value="1"/>
</dbReference>
<dbReference type="PANTHER" id="PTHR45753:SF6">
    <property type="entry name" value="ASPARTATE CARBAMOYLTRANSFERASE"/>
    <property type="match status" value="1"/>
</dbReference>
<dbReference type="PANTHER" id="PTHR45753">
    <property type="entry name" value="ORNITHINE CARBAMOYLTRANSFERASE, MITOCHONDRIAL"/>
    <property type="match status" value="1"/>
</dbReference>
<dbReference type="Pfam" id="PF00185">
    <property type="entry name" value="OTCace"/>
    <property type="match status" value="1"/>
</dbReference>
<dbReference type="Pfam" id="PF02729">
    <property type="entry name" value="OTCace_N"/>
    <property type="match status" value="1"/>
</dbReference>
<dbReference type="PRINTS" id="PR00100">
    <property type="entry name" value="AOTCASE"/>
</dbReference>
<dbReference type="PRINTS" id="PR00101">
    <property type="entry name" value="ATCASE"/>
</dbReference>
<dbReference type="SUPFAM" id="SSF53671">
    <property type="entry name" value="Aspartate/ornithine carbamoyltransferase"/>
    <property type="match status" value="1"/>
</dbReference>
<dbReference type="PROSITE" id="PS00097">
    <property type="entry name" value="CARBAMOYLTRANSFERASE"/>
    <property type="match status" value="1"/>
</dbReference>
<keyword id="KW-0665">Pyrimidine biosynthesis</keyword>
<keyword id="KW-1185">Reference proteome</keyword>
<keyword id="KW-0808">Transferase</keyword>
<feature type="chain" id="PRO_0000301632" description="Aspartate carbamoyltransferase catalytic subunit">
    <location>
        <begin position="1"/>
        <end position="349"/>
    </location>
</feature>
<feature type="binding site" evidence="1">
    <location>
        <position position="59"/>
    </location>
    <ligand>
        <name>carbamoyl phosphate</name>
        <dbReference type="ChEBI" id="CHEBI:58228"/>
    </ligand>
</feature>
<feature type="binding site" evidence="1">
    <location>
        <position position="60"/>
    </location>
    <ligand>
        <name>carbamoyl phosphate</name>
        <dbReference type="ChEBI" id="CHEBI:58228"/>
    </ligand>
</feature>
<feature type="binding site" evidence="1">
    <location>
        <position position="87"/>
    </location>
    <ligand>
        <name>L-aspartate</name>
        <dbReference type="ChEBI" id="CHEBI:29991"/>
    </ligand>
</feature>
<feature type="binding site" evidence="1">
    <location>
        <position position="109"/>
    </location>
    <ligand>
        <name>carbamoyl phosphate</name>
        <dbReference type="ChEBI" id="CHEBI:58228"/>
    </ligand>
</feature>
<feature type="binding site" evidence="1">
    <location>
        <position position="142"/>
    </location>
    <ligand>
        <name>carbamoyl phosphate</name>
        <dbReference type="ChEBI" id="CHEBI:58228"/>
    </ligand>
</feature>
<feature type="binding site" evidence="1">
    <location>
        <position position="145"/>
    </location>
    <ligand>
        <name>carbamoyl phosphate</name>
        <dbReference type="ChEBI" id="CHEBI:58228"/>
    </ligand>
</feature>
<feature type="binding site" evidence="1">
    <location>
        <position position="182"/>
    </location>
    <ligand>
        <name>L-aspartate</name>
        <dbReference type="ChEBI" id="CHEBI:29991"/>
    </ligand>
</feature>
<feature type="binding site" evidence="1">
    <location>
        <position position="253"/>
    </location>
    <ligand>
        <name>L-aspartate</name>
        <dbReference type="ChEBI" id="CHEBI:29991"/>
    </ligand>
</feature>
<feature type="binding site" evidence="1">
    <location>
        <position position="294"/>
    </location>
    <ligand>
        <name>carbamoyl phosphate</name>
        <dbReference type="ChEBI" id="CHEBI:58228"/>
    </ligand>
</feature>
<feature type="binding site" evidence="1">
    <location>
        <position position="295"/>
    </location>
    <ligand>
        <name>carbamoyl phosphate</name>
        <dbReference type="ChEBI" id="CHEBI:58228"/>
    </ligand>
</feature>
<sequence>MSGWSHRHVLDLASFSRDDYATVLELAHRFRSMPVTGARKLPALQGRLVATLFFEPSTRTRSSFELAAKRLSADVQSFSPSSSSLSKGESLLDTARTYVAMGADVLVIRHRCTDVPAQLASELDQAGERTVVLNGGDGQHSHPSQGLLDLYTLAHHFDPRNSQLDALQGKRIVIVGDVVHSRVARSNLWALSACGADVVLCGPPSLVPDAFAAFLDAPPPGQASDPVRERGTVQISRSLDDCLSGADAVMTLRLQKERMTDHLLTNLDRYHRDFGLTHERLRRCAFSGPVLHPGPVNRGVEMSGGLLDDRSICLVEDQVRNGIPIRMALLYLMAASDPVAESSRASAPS</sequence>
<proteinExistence type="inferred from homology"/>
<organism>
    <name type="scientific">Synechococcus sp. (strain CC9311)</name>
    <dbReference type="NCBI Taxonomy" id="64471"/>
    <lineage>
        <taxon>Bacteria</taxon>
        <taxon>Bacillati</taxon>
        <taxon>Cyanobacteriota</taxon>
        <taxon>Cyanophyceae</taxon>
        <taxon>Synechococcales</taxon>
        <taxon>Synechococcaceae</taxon>
        <taxon>Synechococcus</taxon>
    </lineage>
</organism>